<reference key="1">
    <citation type="journal article" date="2003" name="Proc. Natl. Acad. Sci. U.S.A.">
        <title>The complete genome sequence of Mycobacterium bovis.</title>
        <authorList>
            <person name="Garnier T."/>
            <person name="Eiglmeier K."/>
            <person name="Camus J.-C."/>
            <person name="Medina N."/>
            <person name="Mansoor H."/>
            <person name="Pryor M."/>
            <person name="Duthoy S."/>
            <person name="Grondin S."/>
            <person name="Lacroix C."/>
            <person name="Monsempe C."/>
            <person name="Simon S."/>
            <person name="Harris B."/>
            <person name="Atkin R."/>
            <person name="Doggett J."/>
            <person name="Mayes R."/>
            <person name="Keating L."/>
            <person name="Wheeler P.R."/>
            <person name="Parkhill J."/>
            <person name="Barrell B.G."/>
            <person name="Cole S.T."/>
            <person name="Gordon S.V."/>
            <person name="Hewinson R.G."/>
        </authorList>
    </citation>
    <scope>NUCLEOTIDE SEQUENCE [LARGE SCALE GENOMIC DNA]</scope>
    <source>
        <strain>ATCC BAA-935 / AF2122/97</strain>
    </source>
</reference>
<reference key="2">
    <citation type="journal article" date="2017" name="Genome Announc.">
        <title>Updated reference genome sequence and annotation of Mycobacterium bovis AF2122/97.</title>
        <authorList>
            <person name="Malone K.M."/>
            <person name="Farrell D."/>
            <person name="Stuber T.P."/>
            <person name="Schubert O.T."/>
            <person name="Aebersold R."/>
            <person name="Robbe-Austerman S."/>
            <person name="Gordon S.V."/>
        </authorList>
    </citation>
    <scope>NUCLEOTIDE SEQUENCE [LARGE SCALE GENOMIC DNA]</scope>
    <scope>GENOME REANNOTATION</scope>
    <source>
        <strain>ATCC BAA-935 / AF2122/97</strain>
    </source>
</reference>
<dbReference type="EMBL" id="LT708304">
    <property type="protein sequence ID" value="SIU00929.1"/>
    <property type="status" value="ALT_INIT"/>
    <property type="molecule type" value="Genomic_DNA"/>
</dbReference>
<dbReference type="RefSeq" id="NP_855966.1">
    <property type="nucleotide sequence ID" value="NC_002945.3"/>
</dbReference>
<dbReference type="KEGG" id="mbo:BQ2027_MB2317"/>
<dbReference type="PATRIC" id="fig|233413.5.peg.2541"/>
<dbReference type="Proteomes" id="UP000001419">
    <property type="component" value="Chromosome"/>
</dbReference>
<dbReference type="InterPro" id="IPR005363">
    <property type="entry name" value="UPF0167"/>
</dbReference>
<dbReference type="Pfam" id="PF03691">
    <property type="entry name" value="UPF0167"/>
    <property type="match status" value="1"/>
</dbReference>
<name>Y2317_MYCBO</name>
<comment type="similarity">
    <text evidence="1">Belongs to the UPF0167 family.</text>
</comment>
<comment type="sequence caution" evidence="1">
    <conflict type="erroneous initiation">
        <sequence resource="EMBL-CDS" id="SIU00929"/>
    </conflict>
    <text>Extended N-terminus.</text>
</comment>
<sequence length="187" mass="20691">MPVEETSTPQKLPQFRYHPDPVGTGSIVADEVSCVSCEQRRPYTYTGPVYAEEELNEAICPWCIADGSAASRFDATFTDAMWAVPDDVPEDVTEEVLCRTPGFTGWLQEEWLHHCGDAAAFLGPVGASEVADLPDALDALRNEYRGYDWPADKIEEFILTLDRNGLATAYLFRCLSCGVHLAYADFA</sequence>
<accession>P67310</accession>
<accession>A0A1R3Y0T0</accession>
<accession>Q50671</accession>
<accession>X2BK96</accession>
<protein>
    <recommendedName>
        <fullName>UPF0167 protein Mb2317</fullName>
    </recommendedName>
</protein>
<proteinExistence type="inferred from homology"/>
<organism>
    <name type="scientific">Mycobacterium bovis (strain ATCC BAA-935 / AF2122/97)</name>
    <dbReference type="NCBI Taxonomy" id="233413"/>
    <lineage>
        <taxon>Bacteria</taxon>
        <taxon>Bacillati</taxon>
        <taxon>Actinomycetota</taxon>
        <taxon>Actinomycetes</taxon>
        <taxon>Mycobacteriales</taxon>
        <taxon>Mycobacteriaceae</taxon>
        <taxon>Mycobacterium</taxon>
        <taxon>Mycobacterium tuberculosis complex</taxon>
    </lineage>
</organism>
<gene>
    <name type="ordered locus">BQ2027_MB2317</name>
</gene>
<feature type="chain" id="PRO_0000209367" description="UPF0167 protein Mb2317">
    <location>
        <begin position="1"/>
        <end position="187"/>
    </location>
</feature>
<keyword id="KW-1185">Reference proteome</keyword>
<evidence type="ECO:0000305" key="1"/>